<organism>
    <name type="scientific">Schistosoma haematobium</name>
    <name type="common">Blood fluke</name>
    <dbReference type="NCBI Taxonomy" id="6185"/>
    <lineage>
        <taxon>Eukaryota</taxon>
        <taxon>Metazoa</taxon>
        <taxon>Spiralia</taxon>
        <taxon>Lophotrochozoa</taxon>
        <taxon>Platyhelminthes</taxon>
        <taxon>Trematoda</taxon>
        <taxon>Digenea</taxon>
        <taxon>Strigeidida</taxon>
        <taxon>Schistosomatoidea</taxon>
        <taxon>Schistosomatidae</taxon>
        <taxon>Schistosoma</taxon>
    </lineage>
</organism>
<proteinExistence type="evidence at protein level"/>
<evidence type="ECO:0000250" key="1">
    <source>
        <dbReference type="UniProtKB" id="C4QM85"/>
    </source>
</evidence>
<evidence type="ECO:0000250" key="2">
    <source>
        <dbReference type="UniProtKB" id="Q5J7P3"/>
    </source>
</evidence>
<evidence type="ECO:0000255" key="3"/>
<evidence type="ECO:0000256" key="4">
    <source>
        <dbReference type="SAM" id="MobiDB-lite"/>
    </source>
</evidence>
<evidence type="ECO:0000269" key="5">
    <source>
    </source>
</evidence>
<evidence type="ECO:0000269" key="6">
    <source>
    </source>
</evidence>
<evidence type="ECO:0000303" key="7">
    <source>
    </source>
</evidence>
<evidence type="ECO:0000303" key="8">
    <source>
    </source>
</evidence>
<evidence type="ECO:0000305" key="9"/>
<evidence type="ECO:0000312" key="10">
    <source>
        <dbReference type="EMBL" id="AAK11492.1"/>
    </source>
</evidence>
<gene>
    <name evidence="7 8" type="primary">TOR</name>
    <name evidence="10" type="synonym">TM3</name>
</gene>
<sequence length="313" mass="34846">PQCESETNFHYDIPPGYKDDVLVDVNNMSPSLVSDTQKHERGSHEVKIKHFSPYIAVCVTTFSLAFCCFMVHAAITRQPTHLLPFFFIQVFDLIICLIHILGFMSSTSDIRLVIHTKTGPIYIKSTGLTFIILSISCMMLAFKAYCLGMVWDCYKYLMLNRRGNLLDDWYSDQWGHLSTFWSLLRTGRNRGNNSIGNSGSPNEPNTRPRPDTITYDPANDLPKYEDILKIRNAYAPPPYYCSNTNGNVNTTTTDAVTTNTTITSATTANATTTITTNANTNTSTTTSVISPLTTTNKDDTQINNASSNAHSSC</sequence>
<keyword id="KW-1003">Cell membrane</keyword>
<keyword id="KW-0472">Membrane</keyword>
<keyword id="KW-0597">Phosphoprotein</keyword>
<keyword id="KW-0675">Receptor</keyword>
<keyword id="KW-0812">Transmembrane</keyword>
<keyword id="KW-1133">Transmembrane helix</keyword>
<comment type="function">
    <text evidence="2 5 6">Cell surface receptor that binds to human complement C2a protein. This results in inhibition of the classical and lectin pathways of complement activation, probably due to interference with binding of C2a to C4b and interference with cleavage by C1 or MASP2 such that C3 convertase cannot be formed. This infers resistance to complement-mediated cell lysis, allowing parasite survival and infection.</text>
</comment>
<comment type="subunit">
    <text evidence="6">Interacts (via N-terminal extracellular domain) with human C2a.</text>
</comment>
<comment type="subcellular location">
    <subcellularLocation>
        <location evidence="5">Cell membrane</location>
        <topology evidence="5">Multi-pass membrane protein</topology>
    </subcellularLocation>
    <text evidence="5">Located on the surface tegumental plasma membrane, and tegumental surface pits of adult schistosomes so in contact with host blood plasma.</text>
</comment>
<comment type="developmental stage">
    <text evidence="5">Highly expressed in parasitic larvae (cercariae) and at a lower level in adults.</text>
</comment>
<comment type="PTM">
    <text evidence="5">Phosphorylated on tyrosine residues.</text>
</comment>
<comment type="miscellaneous">
    <text evidence="5 7">Specifically and strongly recognized by a serum from baboons vaccinated with irradiated parasite. Potential vaccine candidate molecule.</text>
</comment>
<comment type="sequence caution" evidence="9">
    <conflict type="erroneous initiation">
        <sequence resource="EMBL-CDS" id="AAK11492"/>
    </conflict>
    <text>Truncated N-terminus.</text>
</comment>
<dbReference type="EMBL" id="U57714">
    <property type="protein sequence ID" value="AAK11492.1"/>
    <property type="status" value="ALT_INIT"/>
    <property type="molecule type" value="mRNA"/>
</dbReference>
<dbReference type="GO" id="GO:0005765">
    <property type="term" value="C:lysosomal membrane"/>
    <property type="evidence" value="ECO:0007669"/>
    <property type="project" value="TreeGrafter"/>
</dbReference>
<dbReference type="GO" id="GO:0005886">
    <property type="term" value="C:plasma membrane"/>
    <property type="evidence" value="ECO:0007669"/>
    <property type="project" value="UniProtKB-SubCell"/>
</dbReference>
<dbReference type="InterPro" id="IPR051115">
    <property type="entry name" value="LAPTM_transporter"/>
</dbReference>
<dbReference type="PANTHER" id="PTHR12479">
    <property type="entry name" value="LYSOSOMAL-ASSOCIATED TRANSMEMBRANE PROTEIN"/>
    <property type="match status" value="1"/>
</dbReference>
<dbReference type="PANTHER" id="PTHR12479:SF10">
    <property type="entry name" value="LYSOSOMAL-ASSOCIATED TRANSMEMBRANE PROTEIN"/>
    <property type="match status" value="1"/>
</dbReference>
<reference evidence="9 10" key="1">
    <citation type="journal article" date="1999" name="Biochim. Biophys. Acta">
        <title>Schistosoma TOR (trispanning orphan receptor), a novel, antigenic surface receptor of the blood-dwelling, Schistosoma parasite.</title>
        <authorList>
            <person name="Inal J.M."/>
        </authorList>
    </citation>
    <scope>NUCLEOTIDE SEQUENCE [MRNA]</scope>
    <scope>FUNCTION</scope>
    <scope>SUBCELLULAR LOCATION</scope>
    <scope>DEVELOPMENTAL STAGE</scope>
    <scope>PHOSPHORYLATION</scope>
</reference>
<reference evidence="9" key="2">
    <citation type="journal article" date="2000" name="FEBS Lett.">
        <title>A Schistosoma protein, Sh-TOR, is a novel inhibitor of complement which binds human C2.</title>
        <authorList>
            <person name="Inal J.M."/>
            <person name="Sim R.B."/>
        </authorList>
    </citation>
    <scope>FUNCTION</scope>
    <scope>INTERACTION WITH HUMAN C2B</scope>
</reference>
<accession>Q9BLM6</accession>
<protein>
    <recommendedName>
        <fullName evidence="1">Tetraspanning orphan receptor</fullName>
    </recommendedName>
    <alternativeName>
        <fullName evidence="1">Complement C2 receptor inhibitor tetraspanning</fullName>
    </alternativeName>
    <alternativeName>
        <fullName evidence="8">Complement C2 receptor inhibitor trispanning</fullName>
    </alternativeName>
    <alternativeName>
        <fullName evidence="10">Trispanning orphan receptor</fullName>
        <shortName evidence="7 8">Sh-TOR</shortName>
    </alternativeName>
</protein>
<feature type="chain" id="PRO_0000412758" description="Tetraspanning orphan receptor">
    <location>
        <begin position="1" status="less than"/>
        <end position="313"/>
    </location>
</feature>
<feature type="topological domain" description="Extracellular" evidence="3">
    <location>
        <begin position="1" status="less than"/>
        <end position="54"/>
    </location>
</feature>
<feature type="transmembrane region" description="Helical" evidence="3">
    <location>
        <begin position="55"/>
        <end position="75"/>
    </location>
</feature>
<feature type="topological domain" description="Cytoplasmic" evidence="3">
    <location>
        <begin position="76"/>
        <end position="82"/>
    </location>
</feature>
<feature type="transmembrane region" description="Helical" evidence="3">
    <location>
        <begin position="83"/>
        <end position="103"/>
    </location>
</feature>
<feature type="topological domain" description="Extracellular" evidence="3">
    <location>
        <begin position="104"/>
        <end position="129"/>
    </location>
</feature>
<feature type="transmembrane region" description="Helical" evidence="3">
    <location>
        <begin position="130"/>
        <end position="150"/>
    </location>
</feature>
<feature type="topological domain" description="Cytoplasmic" evidence="3">
    <location>
        <begin position="151"/>
        <end position="313"/>
    </location>
</feature>
<feature type="region of interest" description="Disordered" evidence="4">
    <location>
        <begin position="192"/>
        <end position="218"/>
    </location>
</feature>
<feature type="region of interest" description="Disordered" evidence="4">
    <location>
        <begin position="279"/>
        <end position="313"/>
    </location>
</feature>
<feature type="compositionally biased region" description="Low complexity" evidence="4">
    <location>
        <begin position="279"/>
        <end position="295"/>
    </location>
</feature>
<feature type="compositionally biased region" description="Polar residues" evidence="4">
    <location>
        <begin position="301"/>
        <end position="313"/>
    </location>
</feature>
<feature type="non-terminal residue" evidence="9">
    <location>
        <position position="1"/>
    </location>
</feature>
<name>TOR_SCHHA</name>